<keyword id="KW-1185">Reference proteome</keyword>
<proteinExistence type="inferred from homology"/>
<protein>
    <recommendedName>
        <fullName evidence="1">UPF0250 protein Sama_2593</fullName>
    </recommendedName>
</protein>
<evidence type="ECO:0000255" key="1">
    <source>
        <dbReference type="HAMAP-Rule" id="MF_00659"/>
    </source>
</evidence>
<feature type="chain" id="PRO_1000061889" description="UPF0250 protein Sama_2593">
    <location>
        <begin position="1"/>
        <end position="88"/>
    </location>
</feature>
<name>Y2593_SHEAM</name>
<gene>
    <name type="ordered locus">Sama_2593</name>
</gene>
<dbReference type="EMBL" id="CP000507">
    <property type="protein sequence ID" value="ABM00796.1"/>
    <property type="molecule type" value="Genomic_DNA"/>
</dbReference>
<dbReference type="SMR" id="A1S8T9"/>
<dbReference type="STRING" id="326297.Sama_2593"/>
<dbReference type="KEGG" id="saz:Sama_2593"/>
<dbReference type="eggNOG" id="COG2921">
    <property type="taxonomic scope" value="Bacteria"/>
</dbReference>
<dbReference type="HOGENOM" id="CLU_161438_2_1_6"/>
<dbReference type="OrthoDB" id="9793424at2"/>
<dbReference type="Proteomes" id="UP000009175">
    <property type="component" value="Chromosome"/>
</dbReference>
<dbReference type="GO" id="GO:0005829">
    <property type="term" value="C:cytosol"/>
    <property type="evidence" value="ECO:0007669"/>
    <property type="project" value="TreeGrafter"/>
</dbReference>
<dbReference type="Gene3D" id="3.30.70.260">
    <property type="match status" value="1"/>
</dbReference>
<dbReference type="HAMAP" id="MF_00659">
    <property type="entry name" value="UPF0250"/>
    <property type="match status" value="1"/>
</dbReference>
<dbReference type="InterPro" id="IPR007454">
    <property type="entry name" value="UPF0250_YbeD-like"/>
</dbReference>
<dbReference type="InterPro" id="IPR027471">
    <property type="entry name" value="YbeD-like_sf"/>
</dbReference>
<dbReference type="NCBIfam" id="NF003447">
    <property type="entry name" value="PRK04998.1"/>
    <property type="match status" value="1"/>
</dbReference>
<dbReference type="PANTHER" id="PTHR38036">
    <property type="entry name" value="UPF0250 PROTEIN YBED"/>
    <property type="match status" value="1"/>
</dbReference>
<dbReference type="PANTHER" id="PTHR38036:SF1">
    <property type="entry name" value="UPF0250 PROTEIN YBED"/>
    <property type="match status" value="1"/>
</dbReference>
<dbReference type="Pfam" id="PF04359">
    <property type="entry name" value="DUF493"/>
    <property type="match status" value="1"/>
</dbReference>
<dbReference type="SUPFAM" id="SSF117991">
    <property type="entry name" value="YbeD/HP0495-like"/>
    <property type="match status" value="1"/>
</dbReference>
<sequence>MLNTTFDQYLEFPCSFPFKVVGDASETLADRVVAVVQQHAPGDYSPTSKVSSKGTYLSVTIRVTVTSKDHIETLYTSLAAIEGVKRVL</sequence>
<organism>
    <name type="scientific">Shewanella amazonensis (strain ATCC BAA-1098 / SB2B)</name>
    <dbReference type="NCBI Taxonomy" id="326297"/>
    <lineage>
        <taxon>Bacteria</taxon>
        <taxon>Pseudomonadati</taxon>
        <taxon>Pseudomonadota</taxon>
        <taxon>Gammaproteobacteria</taxon>
        <taxon>Alteromonadales</taxon>
        <taxon>Shewanellaceae</taxon>
        <taxon>Shewanella</taxon>
    </lineage>
</organism>
<accession>A1S8T9</accession>
<comment type="similarity">
    <text evidence="1">Belongs to the UPF0250 family.</text>
</comment>
<reference key="1">
    <citation type="submission" date="2006-12" db="EMBL/GenBank/DDBJ databases">
        <title>Complete sequence of Shewanella amazonensis SB2B.</title>
        <authorList>
            <consortium name="US DOE Joint Genome Institute"/>
            <person name="Copeland A."/>
            <person name="Lucas S."/>
            <person name="Lapidus A."/>
            <person name="Barry K."/>
            <person name="Detter J.C."/>
            <person name="Glavina del Rio T."/>
            <person name="Hammon N."/>
            <person name="Israni S."/>
            <person name="Dalin E."/>
            <person name="Tice H."/>
            <person name="Pitluck S."/>
            <person name="Munk A.C."/>
            <person name="Brettin T."/>
            <person name="Bruce D."/>
            <person name="Han C."/>
            <person name="Tapia R."/>
            <person name="Gilna P."/>
            <person name="Schmutz J."/>
            <person name="Larimer F."/>
            <person name="Land M."/>
            <person name="Hauser L."/>
            <person name="Kyrpides N."/>
            <person name="Mikhailova N."/>
            <person name="Fredrickson J."/>
            <person name="Richardson P."/>
        </authorList>
    </citation>
    <scope>NUCLEOTIDE SEQUENCE [LARGE SCALE GENOMIC DNA]</scope>
    <source>
        <strain>ATCC BAA-1098 / SB2B</strain>
    </source>
</reference>